<evidence type="ECO:0000255" key="1">
    <source>
        <dbReference type="HAMAP-Rule" id="MF_01545"/>
    </source>
</evidence>
<protein>
    <recommendedName>
        <fullName evidence="1">p-hydroxybenzoic acid efflux pump subunit AaeB</fullName>
        <shortName evidence="1">pHBA efflux pump protein B</shortName>
    </recommendedName>
</protein>
<gene>
    <name evidence="1" type="primary">aaeB</name>
    <name type="ordered locus">ECA0279</name>
</gene>
<name>AAEB_PECAS</name>
<proteinExistence type="inferred from homology"/>
<organism>
    <name type="scientific">Pectobacterium atrosepticum (strain SCRI 1043 / ATCC BAA-672)</name>
    <name type="common">Erwinia carotovora subsp. atroseptica</name>
    <dbReference type="NCBI Taxonomy" id="218491"/>
    <lineage>
        <taxon>Bacteria</taxon>
        <taxon>Pseudomonadati</taxon>
        <taxon>Pseudomonadota</taxon>
        <taxon>Gammaproteobacteria</taxon>
        <taxon>Enterobacterales</taxon>
        <taxon>Pectobacteriaceae</taxon>
        <taxon>Pectobacterium</taxon>
    </lineage>
</organism>
<comment type="function">
    <text evidence="1">Forms an efflux pump with AaeA. Could function as a metabolic relief valve, allowing to eliminate certain compounds when they accumulate to high levels in the cell.</text>
</comment>
<comment type="subcellular location">
    <subcellularLocation>
        <location evidence="1">Cell inner membrane</location>
        <topology evidence="1">Multi-pass membrane protein</topology>
    </subcellularLocation>
</comment>
<comment type="similarity">
    <text evidence="1">Belongs to the aromatic acid exporter ArAE (TC 2.A.85) family.</text>
</comment>
<keyword id="KW-0997">Cell inner membrane</keyword>
<keyword id="KW-1003">Cell membrane</keyword>
<keyword id="KW-0472">Membrane</keyword>
<keyword id="KW-1185">Reference proteome</keyword>
<keyword id="KW-0812">Transmembrane</keyword>
<keyword id="KW-1133">Transmembrane helix</keyword>
<keyword id="KW-0813">Transport</keyword>
<feature type="chain" id="PRO_0000210080" description="p-hydroxybenzoic acid efflux pump subunit AaeB">
    <location>
        <begin position="1"/>
        <end position="662"/>
    </location>
</feature>
<feature type="transmembrane region" description="Helical" evidence="1">
    <location>
        <begin position="22"/>
        <end position="42"/>
    </location>
</feature>
<feature type="transmembrane region" description="Helical" evidence="1">
    <location>
        <begin position="52"/>
        <end position="72"/>
    </location>
</feature>
<feature type="transmembrane region" description="Helical" evidence="1">
    <location>
        <begin position="76"/>
        <end position="96"/>
    </location>
</feature>
<feature type="transmembrane region" description="Helical" evidence="1">
    <location>
        <begin position="102"/>
        <end position="122"/>
    </location>
</feature>
<feature type="transmembrane region" description="Helical" evidence="1">
    <location>
        <begin position="129"/>
        <end position="149"/>
    </location>
</feature>
<feature type="transmembrane region" description="Helical" evidence="1">
    <location>
        <begin position="161"/>
        <end position="181"/>
    </location>
</feature>
<feature type="transmembrane region" description="Helical" evidence="1">
    <location>
        <begin position="378"/>
        <end position="398"/>
    </location>
</feature>
<feature type="transmembrane region" description="Helical" evidence="1">
    <location>
        <begin position="415"/>
        <end position="435"/>
    </location>
</feature>
<feature type="transmembrane region" description="Helical" evidence="1">
    <location>
        <begin position="439"/>
        <end position="459"/>
    </location>
</feature>
<feature type="transmembrane region" description="Helical" evidence="1">
    <location>
        <begin position="465"/>
        <end position="485"/>
    </location>
</feature>
<feature type="transmembrane region" description="Helical" evidence="1">
    <location>
        <begin position="491"/>
        <end position="511"/>
    </location>
</feature>
<dbReference type="EMBL" id="BX950851">
    <property type="protein sequence ID" value="CAG73199.1"/>
    <property type="molecule type" value="Genomic_DNA"/>
</dbReference>
<dbReference type="RefSeq" id="WP_011091913.1">
    <property type="nucleotide sequence ID" value="NC_004547.2"/>
</dbReference>
<dbReference type="SMR" id="Q6DAH4"/>
<dbReference type="STRING" id="218491.ECA0279"/>
<dbReference type="KEGG" id="eca:ECA0279"/>
<dbReference type="PATRIC" id="fig|218491.5.peg.281"/>
<dbReference type="eggNOG" id="COG1289">
    <property type="taxonomic scope" value="Bacteria"/>
</dbReference>
<dbReference type="HOGENOM" id="CLU_027647_0_0_6"/>
<dbReference type="OrthoDB" id="9807111at2"/>
<dbReference type="Proteomes" id="UP000007966">
    <property type="component" value="Chromosome"/>
</dbReference>
<dbReference type="GO" id="GO:0005886">
    <property type="term" value="C:plasma membrane"/>
    <property type="evidence" value="ECO:0007669"/>
    <property type="project" value="UniProtKB-SubCell"/>
</dbReference>
<dbReference type="GO" id="GO:0022857">
    <property type="term" value="F:transmembrane transporter activity"/>
    <property type="evidence" value="ECO:0007669"/>
    <property type="project" value="UniProtKB-UniRule"/>
</dbReference>
<dbReference type="GO" id="GO:0046942">
    <property type="term" value="P:carboxylic acid transport"/>
    <property type="evidence" value="ECO:0007669"/>
    <property type="project" value="InterPro"/>
</dbReference>
<dbReference type="HAMAP" id="MF_01545">
    <property type="entry name" value="AaeB"/>
    <property type="match status" value="1"/>
</dbReference>
<dbReference type="InterPro" id="IPR006726">
    <property type="entry name" value="PHBA_efflux_AaeB/fusaric-R"/>
</dbReference>
<dbReference type="InterPro" id="IPR023706">
    <property type="entry name" value="PHBA_efflux_pump_AaeB"/>
</dbReference>
<dbReference type="NCBIfam" id="NF007916">
    <property type="entry name" value="PRK10631.1"/>
    <property type="match status" value="1"/>
</dbReference>
<dbReference type="PANTHER" id="PTHR30509:SF9">
    <property type="entry name" value="MULTIDRUG RESISTANCE PROTEIN MDTO"/>
    <property type="match status" value="1"/>
</dbReference>
<dbReference type="PANTHER" id="PTHR30509">
    <property type="entry name" value="P-HYDROXYBENZOIC ACID EFFLUX PUMP SUBUNIT-RELATED"/>
    <property type="match status" value="1"/>
</dbReference>
<dbReference type="Pfam" id="PF04632">
    <property type="entry name" value="FUSC"/>
    <property type="match status" value="1"/>
</dbReference>
<accession>Q6DAH4</accession>
<sequence length="662" mass="73089">MKTSSLTGSLFFTTPKFARLRFAFKLSFAIVLSLFLGFHLQLETPRWSVLTAAIVAAGPAFAAGGEPFSGAIRHRGMLRIIGTFIGCIGALVIIIATVRAPVVMLMLCCIWAGLCTWVSSLVKVENAYIFGLAGYTALIIIVSTQGTPLLTPQFAVERCSEIVLGIVCAILADLLFSPRSIKQDVDRSIGELLVDQYRLLQLSMSGTEKEAIDAAWHALVRKTTALSGMRSSLMLESSRWQNSNRRLTSLHTQSLMMITQACETYLILQDVPTPVKSSLKMVLDQPVESLRDVHCRVKALRHLIAADSRDVPPTLIDWVGAATRYLLLAKGVQANGRLNTIEADVLNSDVEIKAPSAETHHAMINGLRTGVATALGCLFWLSTGWTSGSVCMVMIAVVTSLAMRLPNPQMMAKDFLFGTIYALPLGALMFMFIMPSTQQSMLLLCLSLGGMAFFLGLEVQKRRLGSLGALASTINILVLDNPMTFNVSQFLDSAIGQIIGCFLALMVIMLIRDNTKAHTGRTLLNRFVYGAVSALTTNRARRKENHLPALYQQLFLLLNRFPDDIAKYRLALWLIIMHQRLRTLDIPQNAALSAFHRQIRATAEQVISARRDATRSRYFAQLLDELERYQQMLTEQQLPPSVTAPVGRLTGILRDYQHALSN</sequence>
<reference key="1">
    <citation type="journal article" date="2004" name="Proc. Natl. Acad. Sci. U.S.A.">
        <title>Genome sequence of the enterobacterial phytopathogen Erwinia carotovora subsp. atroseptica and characterization of virulence factors.</title>
        <authorList>
            <person name="Bell K.S."/>
            <person name="Sebaihia M."/>
            <person name="Pritchard L."/>
            <person name="Holden M.T.G."/>
            <person name="Hyman L.J."/>
            <person name="Holeva M.C."/>
            <person name="Thomson N.R."/>
            <person name="Bentley S.D."/>
            <person name="Churcher L.J.C."/>
            <person name="Mungall K."/>
            <person name="Atkin R."/>
            <person name="Bason N."/>
            <person name="Brooks K."/>
            <person name="Chillingworth T."/>
            <person name="Clark K."/>
            <person name="Doggett J."/>
            <person name="Fraser A."/>
            <person name="Hance Z."/>
            <person name="Hauser H."/>
            <person name="Jagels K."/>
            <person name="Moule S."/>
            <person name="Norbertczak H."/>
            <person name="Ormond D."/>
            <person name="Price C."/>
            <person name="Quail M.A."/>
            <person name="Sanders M."/>
            <person name="Walker D."/>
            <person name="Whitehead S."/>
            <person name="Salmond G.P.C."/>
            <person name="Birch P.R.J."/>
            <person name="Parkhill J."/>
            <person name="Toth I.K."/>
        </authorList>
    </citation>
    <scope>NUCLEOTIDE SEQUENCE [LARGE SCALE GENOMIC DNA]</scope>
    <source>
        <strain>SCRI 1043 / ATCC BAA-672</strain>
    </source>
</reference>